<feature type="chain" id="PRO_1000047078" description="Citrate lyase acyl carrier protein">
    <location>
        <begin position="1"/>
        <end position="97"/>
    </location>
</feature>
<feature type="modified residue" description="O-(phosphoribosyl dephospho-coenzyme A)serine" evidence="1">
    <location>
        <position position="14"/>
    </location>
</feature>
<dbReference type="EMBL" id="CP000463">
    <property type="protein sequence ID" value="ABJ07360.1"/>
    <property type="molecule type" value="Genomic_DNA"/>
</dbReference>
<dbReference type="SMR" id="Q07L24"/>
<dbReference type="STRING" id="316055.RPE_3428"/>
<dbReference type="KEGG" id="rpe:RPE_3428"/>
<dbReference type="eggNOG" id="COG3052">
    <property type="taxonomic scope" value="Bacteria"/>
</dbReference>
<dbReference type="HOGENOM" id="CLU_158489_0_0_5"/>
<dbReference type="OrthoDB" id="9798736at2"/>
<dbReference type="GO" id="GO:0005737">
    <property type="term" value="C:cytoplasm"/>
    <property type="evidence" value="ECO:0007669"/>
    <property type="project" value="UniProtKB-SubCell"/>
</dbReference>
<dbReference type="HAMAP" id="MF_00805">
    <property type="entry name" value="CitD"/>
    <property type="match status" value="1"/>
</dbReference>
<dbReference type="InterPro" id="IPR006495">
    <property type="entry name" value="CitD"/>
</dbReference>
<dbReference type="InterPro" id="IPR023439">
    <property type="entry name" value="Mal_deCO2ase/Cit_lyase_ACP"/>
</dbReference>
<dbReference type="NCBIfam" id="TIGR01608">
    <property type="entry name" value="citD"/>
    <property type="match status" value="1"/>
</dbReference>
<dbReference type="NCBIfam" id="NF009726">
    <property type="entry name" value="PRK13253.1"/>
    <property type="match status" value="1"/>
</dbReference>
<dbReference type="Pfam" id="PF06857">
    <property type="entry name" value="ACP"/>
    <property type="match status" value="1"/>
</dbReference>
<dbReference type="PIRSF" id="PIRSF002736">
    <property type="entry name" value="Citrt_lyas_gamma"/>
    <property type="match status" value="1"/>
</dbReference>
<gene>
    <name evidence="1" type="primary">citD</name>
    <name type="ordered locus">RPE_3428</name>
</gene>
<proteinExistence type="inferred from homology"/>
<reference key="1">
    <citation type="submission" date="2006-09" db="EMBL/GenBank/DDBJ databases">
        <title>Complete sequence of Rhodopseudomonas palustris BisA53.</title>
        <authorList>
            <consortium name="US DOE Joint Genome Institute"/>
            <person name="Copeland A."/>
            <person name="Lucas S."/>
            <person name="Lapidus A."/>
            <person name="Barry K."/>
            <person name="Detter J.C."/>
            <person name="Glavina del Rio T."/>
            <person name="Hammon N."/>
            <person name="Israni S."/>
            <person name="Dalin E."/>
            <person name="Tice H."/>
            <person name="Pitluck S."/>
            <person name="Chain P."/>
            <person name="Malfatti S."/>
            <person name="Shin M."/>
            <person name="Vergez L."/>
            <person name="Schmutz J."/>
            <person name="Larimer F."/>
            <person name="Land M."/>
            <person name="Hauser L."/>
            <person name="Pelletier D.A."/>
            <person name="Kyrpides N."/>
            <person name="Kim E."/>
            <person name="Harwood C.S."/>
            <person name="Oda Y."/>
            <person name="Richardson P."/>
        </authorList>
    </citation>
    <scope>NUCLEOTIDE SEQUENCE [LARGE SCALE GENOMIC DNA]</scope>
    <source>
        <strain>BisA53</strain>
    </source>
</reference>
<comment type="function">
    <text evidence="1">Covalent carrier of the coenzyme of citrate lyase.</text>
</comment>
<comment type="subunit">
    <text evidence="1">Oligomer with a subunit composition of (alpha,beta,gamma)6.</text>
</comment>
<comment type="subcellular location">
    <subcellularLocation>
        <location evidence="1">Cytoplasm</location>
    </subcellularLocation>
</comment>
<comment type="similarity">
    <text evidence="1">Belongs to the CitD family.</text>
</comment>
<protein>
    <recommendedName>
        <fullName evidence="1">Citrate lyase acyl carrier protein</fullName>
    </recommendedName>
    <alternativeName>
        <fullName evidence="1">Citrate lyase gamma chain</fullName>
    </alternativeName>
</protein>
<name>CITD_RHOP5</name>
<accession>Q07L24</accession>
<organism>
    <name type="scientific">Rhodopseudomonas palustris (strain BisA53)</name>
    <dbReference type="NCBI Taxonomy" id="316055"/>
    <lineage>
        <taxon>Bacteria</taxon>
        <taxon>Pseudomonadati</taxon>
        <taxon>Pseudomonadota</taxon>
        <taxon>Alphaproteobacteria</taxon>
        <taxon>Hyphomicrobiales</taxon>
        <taxon>Nitrobacteraceae</taxon>
        <taxon>Rhodopseudomonas</taxon>
    </lineage>
</organism>
<keyword id="KW-0963">Cytoplasm</keyword>
<keyword id="KW-0597">Phosphoprotein</keyword>
<evidence type="ECO:0000255" key="1">
    <source>
        <dbReference type="HAMAP-Rule" id="MF_00805"/>
    </source>
</evidence>
<sequence>MKIVRGALAGTLESSDLLVRISPKEDGLELVLNSEVIHQFGPHIEKVARDCLARLGITEALVVIEDKGALDCVVAARVQTAISRAVDEWNPDWSALS</sequence>